<name>R1B19_SOLDE</name>
<sequence>MNFNNELSDLKNRFLFRTLRVQEYSDVARDRIDFFIWELKFLNCVLHLQSFTFASECGMLDISQKMLEICKRFNTPPPHNAFAYWKEVICKRLCAISIRPDASSDDGFACWKKVIWKTKQEFRAKYSFPKTLLADNKVYDDTNPKFVMEFIDAVVGNLNVLVKINDPSSLHFVPGPKEQIEQVLKELKLLRFFVCFVSNKCTEPQYQYTTFYTHALIEASHIAMVVWLNLPIYGNRNQDLASNEVSCLFSDFMEMKIKSIQPGISRNNIYINVLRALKSTIPHAQDKHAAESGIVETPTHNLMVGLSDQMANLQEMLCLLRDNLIHLPILDLEFHLQDMDSVILDVGLLIYSFYDMKGEKEDTTLEDINRELGFDLPRNIEPIKAMVYLVMQKAFHCNLPRVHGLGYADFLLKNLKDFQGRYSDSLAFLKNQLQVIQTEFESLQPFLKVVVEEPHNKFKRLNEDCAIQIIRKAHEVEYVVDACINKGIPHWCLERWLQDIIEEITCIKAKIQEKNTVDDTMKTVIVRTSSKLARTPRMKEEIVGFEDIIENLRKKLLNGTKGQDVISIHGMPGLGKTTLANRLYSDRSVVSQFDICAQCCVSQVYSYKDLLLSLLCDTIGEESERRELPDNELADMLRKTLLPRRYLILVDDVWENSVWDDLRGCFPDTNNRSRIILTTRHHEVAKYASVHIDPLHLRMFDENESWKFLEKNVFGEESCSPLLRDVGQRIAKMCGQLPFSIVLVAGIPSEMEKEVECWEQVANNLGTRIHNDSRAIVDQSYHVLPCHLKSCFLYFAAFLEDVVIYISRLLRLWISEAFIKSSEGRSLEDIAEGYLENLIGRNLVMVTQRADSDGKVKTCRLHDVLLDFCKKRAAEENFLLWINRDLITKPFSCVYSHKQHAHLAFTEMHNLVEWSASCSFVGSVVLSKKYEPYFSIDLYSFYDFAISRNLPNFKFLKVLDLEHQVFIDFIPTELVYLKYFSAHIKQNSIPSSIYNLWNPETLKLKRPRHVRRCTLLLPSTVWDMVKLRHLYIPDFSTENEEALLENSAKLYDLETLSTPYFSRYHVLNFPIRLEILKLYRSKAFKTIPFCISAPNLKYLKLSGFYLDSQYLSETADHLKNLEVLKLYYVEFGDHREWKVSNGMFPQLKILKLEYLSLMKWIVADDAFPNLEQLYIKVENCNELVVKSAMNIQETQVEDNQNTNFKLVLIEKKTLKLNLSHDEDIPKAFKRLFLCPGIESVSTDRKEKKLTVTGDVDAGSSISCGETEKAWHARVVVPTCQHKCGIVILLTSNELGLGREERKKRRKRRKRRAIKEIIVDIVGGDPY</sequence>
<keyword id="KW-0067">ATP-binding</keyword>
<keyword id="KW-0175">Coiled coil</keyword>
<keyword id="KW-0963">Cytoplasm</keyword>
<keyword id="KW-0381">Hypersensitive response</keyword>
<keyword id="KW-0433">Leucine-rich repeat</keyword>
<keyword id="KW-0472">Membrane</keyword>
<keyword id="KW-0547">Nucleotide-binding</keyword>
<keyword id="KW-0611">Plant defense</keyword>
<keyword id="KW-0677">Repeat</keyword>
<comment type="function">
    <text>Confers resistance to late blight (Phytophthora infestans) races carrying the avirulence gene Avr1. Resistance proteins guard the plant against pathogens that contain an appropriate avirulence protein via an indirect interaction with this avirulence protein. That triggers a defense system including the hypersensitive response, which restricts the pathogen growth.</text>
</comment>
<comment type="subcellular location">
    <subcellularLocation>
        <location evidence="1">Cytoplasm</location>
    </subcellularLocation>
    <subcellularLocation>
        <location evidence="1">Membrane</location>
        <topology evidence="1">Peripheral membrane protein</topology>
    </subcellularLocation>
</comment>
<comment type="miscellaneous">
    <text>This protein is encoded by the haplotype B genome of the allohexaploid Solanum demissum.</text>
</comment>
<comment type="similarity">
    <text evidence="4">Belongs to the disease resistance NB-LRR family.</text>
</comment>
<comment type="caution">
    <text evidence="4">Could be the product of a pseudogene.</text>
</comment>
<comment type="sequence caution" evidence="4">
    <conflict type="erroneous gene model prediction">
        <sequence resource="EMBL-CDS" id="ABI34343"/>
    </conflict>
</comment>
<comment type="sequence caution" evidence="4">
    <conflict type="erroneous gene model prediction">
        <sequence resource="EMBL-CDS" id="ABI34350"/>
    </conflict>
</comment>
<organism>
    <name type="scientific">Solanum demissum</name>
    <name type="common">Wild potato</name>
    <dbReference type="NCBI Taxonomy" id="50514"/>
    <lineage>
        <taxon>Eukaryota</taxon>
        <taxon>Viridiplantae</taxon>
        <taxon>Streptophyta</taxon>
        <taxon>Embryophyta</taxon>
        <taxon>Tracheophyta</taxon>
        <taxon>Spermatophyta</taxon>
        <taxon>Magnoliopsida</taxon>
        <taxon>eudicotyledons</taxon>
        <taxon>Gunneridae</taxon>
        <taxon>Pentapetalae</taxon>
        <taxon>asterids</taxon>
        <taxon>lamiids</taxon>
        <taxon>Solanales</taxon>
        <taxon>Solanaceae</taxon>
        <taxon>Solanoideae</taxon>
        <taxon>Solaneae</taxon>
        <taxon>Solanum</taxon>
    </lineage>
</organism>
<dbReference type="EMBL" id="AC149265">
    <property type="protein sequence ID" value="ABI34350.1"/>
    <property type="status" value="ALT_SEQ"/>
    <property type="molecule type" value="Genomic_DNA"/>
</dbReference>
<dbReference type="EMBL" id="AC149265">
    <property type="protein sequence ID" value="ABI34343.1"/>
    <property type="status" value="ALT_SEQ"/>
    <property type="molecule type" value="Genomic_DNA"/>
</dbReference>
<dbReference type="SMR" id="Q6L406"/>
<dbReference type="GO" id="GO:0005737">
    <property type="term" value="C:cytoplasm"/>
    <property type="evidence" value="ECO:0007669"/>
    <property type="project" value="UniProtKB-SubCell"/>
</dbReference>
<dbReference type="GO" id="GO:0016020">
    <property type="term" value="C:membrane"/>
    <property type="evidence" value="ECO:0007669"/>
    <property type="project" value="UniProtKB-SubCell"/>
</dbReference>
<dbReference type="GO" id="GO:0043531">
    <property type="term" value="F:ADP binding"/>
    <property type="evidence" value="ECO:0007669"/>
    <property type="project" value="InterPro"/>
</dbReference>
<dbReference type="GO" id="GO:0005524">
    <property type="term" value="F:ATP binding"/>
    <property type="evidence" value="ECO:0007669"/>
    <property type="project" value="UniProtKB-KW"/>
</dbReference>
<dbReference type="GO" id="GO:0046872">
    <property type="term" value="F:metal ion binding"/>
    <property type="evidence" value="ECO:0007669"/>
    <property type="project" value="InterPro"/>
</dbReference>
<dbReference type="GO" id="GO:0009626">
    <property type="term" value="P:plant-type hypersensitive response"/>
    <property type="evidence" value="ECO:0007669"/>
    <property type="project" value="UniProtKB-KW"/>
</dbReference>
<dbReference type="CDD" id="cd14798">
    <property type="entry name" value="RX-CC_like"/>
    <property type="match status" value="1"/>
</dbReference>
<dbReference type="FunFam" id="3.40.50.300:FF:001091">
    <property type="entry name" value="Probable disease resistance protein At1g61300"/>
    <property type="match status" value="1"/>
</dbReference>
<dbReference type="FunFam" id="1.10.10.10:FF:000322">
    <property type="entry name" value="Probable disease resistance protein At1g63360"/>
    <property type="match status" value="1"/>
</dbReference>
<dbReference type="Gene3D" id="3.30.70.100">
    <property type="match status" value="1"/>
</dbReference>
<dbReference type="Gene3D" id="1.10.8.430">
    <property type="entry name" value="Helical domain of apoptotic protease-activating factors"/>
    <property type="match status" value="1"/>
</dbReference>
<dbReference type="Gene3D" id="3.40.50.300">
    <property type="entry name" value="P-loop containing nucleotide triphosphate hydrolases"/>
    <property type="match status" value="1"/>
</dbReference>
<dbReference type="Gene3D" id="3.80.10.10">
    <property type="entry name" value="Ribonuclease Inhibitor"/>
    <property type="match status" value="1"/>
</dbReference>
<dbReference type="Gene3D" id="1.10.10.10">
    <property type="entry name" value="Winged helix-like DNA-binding domain superfamily/Winged helix DNA-binding domain"/>
    <property type="match status" value="1"/>
</dbReference>
<dbReference type="InterPro" id="IPR042197">
    <property type="entry name" value="Apaf_helical"/>
</dbReference>
<dbReference type="InterPro" id="IPR044974">
    <property type="entry name" value="Disease_R_plants"/>
</dbReference>
<dbReference type="InterPro" id="IPR006121">
    <property type="entry name" value="HMA_dom"/>
</dbReference>
<dbReference type="InterPro" id="IPR032675">
    <property type="entry name" value="LRR_dom_sf"/>
</dbReference>
<dbReference type="InterPro" id="IPR002182">
    <property type="entry name" value="NB-ARC"/>
</dbReference>
<dbReference type="InterPro" id="IPR027417">
    <property type="entry name" value="P-loop_NTPase"/>
</dbReference>
<dbReference type="InterPro" id="IPR021929">
    <property type="entry name" value="R1A-like_N"/>
</dbReference>
<dbReference type="InterPro" id="IPR038005">
    <property type="entry name" value="RX-like_CC"/>
</dbReference>
<dbReference type="InterPro" id="IPR036388">
    <property type="entry name" value="WH-like_DNA-bd_sf"/>
</dbReference>
<dbReference type="PANTHER" id="PTHR23155:SF1152">
    <property type="entry name" value="AAA+ ATPASE DOMAIN-CONTAINING PROTEIN"/>
    <property type="match status" value="1"/>
</dbReference>
<dbReference type="PANTHER" id="PTHR23155">
    <property type="entry name" value="DISEASE RESISTANCE PROTEIN RP"/>
    <property type="match status" value="1"/>
</dbReference>
<dbReference type="Pfam" id="PF00931">
    <property type="entry name" value="NB-ARC"/>
    <property type="match status" value="1"/>
</dbReference>
<dbReference type="Pfam" id="PF12061">
    <property type="entry name" value="NB-LRR"/>
    <property type="match status" value="1"/>
</dbReference>
<dbReference type="Pfam" id="PF23559">
    <property type="entry name" value="WH_DRP"/>
    <property type="match status" value="1"/>
</dbReference>
<dbReference type="PRINTS" id="PR00364">
    <property type="entry name" value="DISEASERSIST"/>
</dbReference>
<dbReference type="SUPFAM" id="SSF52540">
    <property type="entry name" value="P-loop containing nucleoside triphosphate hydrolases"/>
    <property type="match status" value="1"/>
</dbReference>
<dbReference type="SUPFAM" id="SSF52047">
    <property type="entry name" value="RNI-like"/>
    <property type="match status" value="1"/>
</dbReference>
<dbReference type="PROSITE" id="PS50846">
    <property type="entry name" value="HMA_2"/>
    <property type="match status" value="1"/>
</dbReference>
<protein>
    <recommendedName>
        <fullName>Putative late blight resistance protein homolog R1B-19</fullName>
    </recommendedName>
</protein>
<feature type="chain" id="PRO_0000233971" description="Putative late blight resistance protein homolog R1B-19">
    <location>
        <begin position="1"/>
        <end position="1326"/>
    </location>
</feature>
<feature type="domain" description="NB-ARC">
    <location>
        <begin position="611"/>
        <end position="864"/>
    </location>
</feature>
<feature type="repeat" description="LRR 1">
    <location>
        <begin position="953"/>
        <end position="978"/>
    </location>
</feature>
<feature type="repeat" description="LRR 2">
    <location>
        <begin position="980"/>
        <end position="996"/>
    </location>
</feature>
<feature type="repeat" description="LRR 3">
    <location>
        <begin position="1027"/>
        <end position="1050"/>
    </location>
</feature>
<feature type="repeat" description="LRR 4">
    <location>
        <begin position="1053"/>
        <end position="1070"/>
    </location>
</feature>
<feature type="repeat" description="LRR 5">
    <location>
        <begin position="1071"/>
        <end position="1094"/>
    </location>
</feature>
<feature type="repeat" description="LRR 6">
    <location>
        <begin position="1098"/>
        <end position="1118"/>
    </location>
</feature>
<feature type="repeat" description="LRR 7">
    <location>
        <begin position="1119"/>
        <end position="1146"/>
    </location>
</feature>
<feature type="repeat" description="LRR 8">
    <location>
        <begin position="1167"/>
        <end position="1191"/>
    </location>
</feature>
<feature type="repeat" description="LRR 9">
    <location>
        <begin position="1208"/>
        <end position="1230"/>
    </location>
</feature>
<feature type="domain" description="HMA" evidence="3">
    <location>
        <begin position="1209"/>
        <end position="1278"/>
    </location>
</feature>
<feature type="coiled-coil region" evidence="2">
    <location>
        <begin position="421"/>
        <end position="444"/>
    </location>
</feature>
<feature type="coiled-coil region" evidence="2">
    <location>
        <begin position="536"/>
        <end position="558"/>
    </location>
</feature>
<feature type="coiled-coil region" evidence="2">
    <location>
        <begin position="749"/>
        <end position="770"/>
    </location>
</feature>
<feature type="binding site" evidence="2">
    <location>
        <begin position="570"/>
        <end position="577"/>
    </location>
    <ligand>
        <name>ATP</name>
        <dbReference type="ChEBI" id="CHEBI:30616"/>
    </ligand>
</feature>
<proteinExistence type="uncertain"/>
<evidence type="ECO:0000250" key="1"/>
<evidence type="ECO:0000255" key="2"/>
<evidence type="ECO:0000255" key="3">
    <source>
        <dbReference type="PROSITE-ProRule" id="PRU00280"/>
    </source>
</evidence>
<evidence type="ECO:0000305" key="4"/>
<gene>
    <name type="primary">R1B-19</name>
    <name type="ORF">PGEC858M02.6</name>
    <name type="ORF">SDM1_44t00002</name>
    <name type="ORF">SDM1_44t00018</name>
</gene>
<accession>Q6L406</accession>
<accession>Q0KIS9</accession>
<accession>Q0KIT0</accession>
<reference key="1">
    <citation type="journal article" date="2005" name="Plant J.">
        <title>The R1 resistance gene cluster contains three groups of independently evolving, type I R1 homologues and shows substantial structural variation among haplotypes of Solanum demissum.</title>
        <authorList>
            <person name="Kuang H."/>
            <person name="Wei F."/>
            <person name="Marano M.R."/>
            <person name="Wirtz U."/>
            <person name="Wang X."/>
            <person name="Liu J."/>
            <person name="Shum W.P."/>
            <person name="Zaborsky J."/>
            <person name="Tallon L.J."/>
            <person name="Rensink W."/>
            <person name="Lobst S."/>
            <person name="Zhang P."/>
            <person name="Tornqvist C.-E."/>
            <person name="Tek A."/>
            <person name="Bamberg J."/>
            <person name="Helgeson J."/>
            <person name="Fry W."/>
            <person name="You F."/>
            <person name="Luo M.-C."/>
            <person name="Jiang J."/>
            <person name="Buell C.R."/>
            <person name="Baker B."/>
        </authorList>
    </citation>
    <scope>NUCLEOTIDE SEQUENCE [GENOMIC DNA]</scope>
</reference>